<keyword id="KW-0067">ATP-binding</keyword>
<keyword id="KW-0963">Cytoplasm</keyword>
<keyword id="KW-0235">DNA replication</keyword>
<keyword id="KW-0238">DNA-binding</keyword>
<keyword id="KW-0446">Lipid-binding</keyword>
<keyword id="KW-0547">Nucleotide-binding</keyword>
<reference key="1">
    <citation type="submission" date="2007-08" db="EMBL/GenBank/DDBJ databases">
        <authorList>
            <consortium name="The Vibrio harveyi Genome Sequencing Project"/>
            <person name="Bassler B."/>
            <person name="Clifton S.W."/>
            <person name="Fulton L."/>
            <person name="Delehaunty K."/>
            <person name="Fronick C."/>
            <person name="Harrison M."/>
            <person name="Markivic C."/>
            <person name="Fulton R."/>
            <person name="Tin-Wollam A.-M."/>
            <person name="Shah N."/>
            <person name="Pepin K."/>
            <person name="Nash W."/>
            <person name="Thiruvilangam P."/>
            <person name="Bhonagiri V."/>
            <person name="Waters C."/>
            <person name="Tu K.C."/>
            <person name="Irgon J."/>
            <person name="Wilson R.K."/>
        </authorList>
    </citation>
    <scope>NUCLEOTIDE SEQUENCE [LARGE SCALE GENOMIC DNA]</scope>
    <source>
        <strain>ATCC BAA-1116 / BB120</strain>
    </source>
</reference>
<accession>A7N1E9</accession>
<gene>
    <name evidence="1" type="primary">dnaA</name>
    <name type="ordered locus">VIBHAR_00442</name>
</gene>
<protein>
    <recommendedName>
        <fullName evidence="1">Chromosomal replication initiator protein DnaA</fullName>
    </recommendedName>
</protein>
<comment type="function">
    <text evidence="1">Plays an essential role in the initiation and regulation of chromosomal replication. ATP-DnaA binds to the origin of replication (oriC) to initiate formation of the DNA replication initiation complex once per cell cycle. Binds the DnaA box (a 9 base pair repeat at the origin) and separates the double-stranded (ds)DNA. Forms a right-handed helical filament on oriC DNA; dsDNA binds to the exterior of the filament while single-stranded (ss)DNA is stabiized in the filament's interior. The ATP-DnaA-oriC complex binds and stabilizes one strand of the AT-rich DNA unwinding element (DUE), permitting loading of DNA polymerase. After initiation quickly degrades to an ADP-DnaA complex that is not apt for DNA replication. Binds acidic phospholipids.</text>
</comment>
<comment type="subunit">
    <text evidence="1">Oligomerizes as a right-handed, spiral filament on DNA at oriC.</text>
</comment>
<comment type="subcellular location">
    <subcellularLocation>
        <location evidence="1">Cytoplasm</location>
    </subcellularLocation>
</comment>
<comment type="domain">
    <text evidence="1">Domain I is involved in oligomerization and binding regulators, domain II is flexibile and of varying length in different bacteria, domain III forms the AAA+ region, while domain IV binds dsDNA.</text>
</comment>
<comment type="similarity">
    <text evidence="1">Belongs to the DnaA family.</text>
</comment>
<proteinExistence type="inferred from homology"/>
<sequence length="468" mass="52990">MSSSLWLQCLQQLQEELPATEFSMWVRPLQAELNDNTLTLFAPNRFVLDWVRDKYLNSINRLLQEYCGNDVPSLRFEVGSRPVAAPKPAPTRTPADVAAESSAPAQLQARKPVHKTWDDDAQAIADINHRSNVNPKHKFNNFVEGKSNQLGLAAARQVSDNPGAAYNPLFLYGGTGLGKTHLLHAVGNAIVDNNPNAKVVYMHSERFVQDMVKALQNNAIEEFKRYYRSVDALLIDDIQFFANKERSQEEFFHTFNALLEGNQQIILTSDRYPKEISGVEDRLKSRFGWGLTVAIEPPELETRVAILMKKAEDHQIHLADEVAFFIAKRLRSNVRELEGALNRVIANANFTGRPITIDFVREALRDLLALQEKLVTIDNIQKTVAEYYKIKVADLLSKRRSRSVARPRQLAMALAKELTNHSLPEIGDAFGGRDHTTVLHACRKIEQLREESHDIKEDYSNLIRTLSS</sequence>
<feature type="chain" id="PRO_1000048756" description="Chromosomal replication initiator protein DnaA">
    <location>
        <begin position="1"/>
        <end position="468"/>
    </location>
</feature>
<feature type="region of interest" description="Domain I, interacts with DnaA modulators" evidence="1">
    <location>
        <begin position="1"/>
        <end position="84"/>
    </location>
</feature>
<feature type="region of interest" description="Disordered" evidence="2">
    <location>
        <begin position="81"/>
        <end position="104"/>
    </location>
</feature>
<feature type="region of interest" description="Domain II" evidence="1">
    <location>
        <begin position="84"/>
        <end position="131"/>
    </location>
</feature>
<feature type="region of interest" description="Domain III, AAA+ region" evidence="1">
    <location>
        <begin position="132"/>
        <end position="348"/>
    </location>
</feature>
<feature type="region of interest" description="Domain IV, binds dsDNA" evidence="1">
    <location>
        <begin position="349"/>
        <end position="468"/>
    </location>
</feature>
<feature type="binding site" evidence="1">
    <location>
        <position position="176"/>
    </location>
    <ligand>
        <name>ATP</name>
        <dbReference type="ChEBI" id="CHEBI:30616"/>
    </ligand>
</feature>
<feature type="binding site" evidence="1">
    <location>
        <position position="178"/>
    </location>
    <ligand>
        <name>ATP</name>
        <dbReference type="ChEBI" id="CHEBI:30616"/>
    </ligand>
</feature>
<feature type="binding site" evidence="1">
    <location>
        <position position="179"/>
    </location>
    <ligand>
        <name>ATP</name>
        <dbReference type="ChEBI" id="CHEBI:30616"/>
    </ligand>
</feature>
<feature type="binding site" evidence="1">
    <location>
        <position position="180"/>
    </location>
    <ligand>
        <name>ATP</name>
        <dbReference type="ChEBI" id="CHEBI:30616"/>
    </ligand>
</feature>
<name>DNAA_VIBC1</name>
<evidence type="ECO:0000255" key="1">
    <source>
        <dbReference type="HAMAP-Rule" id="MF_00377"/>
    </source>
</evidence>
<evidence type="ECO:0000256" key="2">
    <source>
        <dbReference type="SAM" id="MobiDB-lite"/>
    </source>
</evidence>
<organism>
    <name type="scientific">Vibrio campbellii (strain ATCC BAA-1116)</name>
    <dbReference type="NCBI Taxonomy" id="2902295"/>
    <lineage>
        <taxon>Bacteria</taxon>
        <taxon>Pseudomonadati</taxon>
        <taxon>Pseudomonadota</taxon>
        <taxon>Gammaproteobacteria</taxon>
        <taxon>Vibrionales</taxon>
        <taxon>Vibrionaceae</taxon>
        <taxon>Vibrio</taxon>
    </lineage>
</organism>
<dbReference type="EMBL" id="CP000789">
    <property type="protein sequence ID" value="ABU69457.1"/>
    <property type="molecule type" value="Genomic_DNA"/>
</dbReference>
<dbReference type="RefSeq" id="WP_005532851.1">
    <property type="nucleotide sequence ID" value="NC_022269.1"/>
</dbReference>
<dbReference type="SMR" id="A7N1E9"/>
<dbReference type="GeneID" id="67375730"/>
<dbReference type="KEGG" id="vha:VIBHAR_00442"/>
<dbReference type="PATRIC" id="fig|338187.25.peg.2148"/>
<dbReference type="Proteomes" id="UP000008152">
    <property type="component" value="Chromosome I"/>
</dbReference>
<dbReference type="GO" id="GO:0005737">
    <property type="term" value="C:cytoplasm"/>
    <property type="evidence" value="ECO:0007669"/>
    <property type="project" value="UniProtKB-SubCell"/>
</dbReference>
<dbReference type="GO" id="GO:0005886">
    <property type="term" value="C:plasma membrane"/>
    <property type="evidence" value="ECO:0007669"/>
    <property type="project" value="TreeGrafter"/>
</dbReference>
<dbReference type="GO" id="GO:0005524">
    <property type="term" value="F:ATP binding"/>
    <property type="evidence" value="ECO:0007669"/>
    <property type="project" value="UniProtKB-UniRule"/>
</dbReference>
<dbReference type="GO" id="GO:0016887">
    <property type="term" value="F:ATP hydrolysis activity"/>
    <property type="evidence" value="ECO:0007669"/>
    <property type="project" value="InterPro"/>
</dbReference>
<dbReference type="GO" id="GO:0003688">
    <property type="term" value="F:DNA replication origin binding"/>
    <property type="evidence" value="ECO:0007669"/>
    <property type="project" value="UniProtKB-UniRule"/>
</dbReference>
<dbReference type="GO" id="GO:0008289">
    <property type="term" value="F:lipid binding"/>
    <property type="evidence" value="ECO:0007669"/>
    <property type="project" value="UniProtKB-KW"/>
</dbReference>
<dbReference type="GO" id="GO:0006270">
    <property type="term" value="P:DNA replication initiation"/>
    <property type="evidence" value="ECO:0007669"/>
    <property type="project" value="UniProtKB-UniRule"/>
</dbReference>
<dbReference type="GO" id="GO:0006275">
    <property type="term" value="P:regulation of DNA replication"/>
    <property type="evidence" value="ECO:0007669"/>
    <property type="project" value="UniProtKB-UniRule"/>
</dbReference>
<dbReference type="CDD" id="cd00009">
    <property type="entry name" value="AAA"/>
    <property type="match status" value="1"/>
</dbReference>
<dbReference type="CDD" id="cd06571">
    <property type="entry name" value="Bac_DnaA_C"/>
    <property type="match status" value="1"/>
</dbReference>
<dbReference type="FunFam" id="1.10.1750.10:FF:000001">
    <property type="entry name" value="Chromosomal replication initiator protein DnaA"/>
    <property type="match status" value="1"/>
</dbReference>
<dbReference type="FunFam" id="1.10.8.60:FF:000003">
    <property type="entry name" value="Chromosomal replication initiator protein DnaA"/>
    <property type="match status" value="1"/>
</dbReference>
<dbReference type="FunFam" id="3.30.300.180:FF:000001">
    <property type="entry name" value="Chromosomal replication initiator protein DnaA"/>
    <property type="match status" value="1"/>
</dbReference>
<dbReference type="FunFam" id="3.40.50.300:FF:000103">
    <property type="entry name" value="Chromosomal replication initiator protein DnaA"/>
    <property type="match status" value="1"/>
</dbReference>
<dbReference type="Gene3D" id="1.10.1750.10">
    <property type="match status" value="1"/>
</dbReference>
<dbReference type="Gene3D" id="1.10.8.60">
    <property type="match status" value="1"/>
</dbReference>
<dbReference type="Gene3D" id="3.30.300.180">
    <property type="match status" value="1"/>
</dbReference>
<dbReference type="Gene3D" id="3.40.50.300">
    <property type="entry name" value="P-loop containing nucleotide triphosphate hydrolases"/>
    <property type="match status" value="1"/>
</dbReference>
<dbReference type="HAMAP" id="MF_00377">
    <property type="entry name" value="DnaA_bact"/>
    <property type="match status" value="1"/>
</dbReference>
<dbReference type="InterPro" id="IPR003593">
    <property type="entry name" value="AAA+_ATPase"/>
</dbReference>
<dbReference type="InterPro" id="IPR001957">
    <property type="entry name" value="Chromosome_initiator_DnaA"/>
</dbReference>
<dbReference type="InterPro" id="IPR020591">
    <property type="entry name" value="Chromosome_initiator_DnaA-like"/>
</dbReference>
<dbReference type="InterPro" id="IPR018312">
    <property type="entry name" value="Chromosome_initiator_DnaA_CS"/>
</dbReference>
<dbReference type="InterPro" id="IPR013159">
    <property type="entry name" value="DnaA_C"/>
</dbReference>
<dbReference type="InterPro" id="IPR013317">
    <property type="entry name" value="DnaA_dom"/>
</dbReference>
<dbReference type="InterPro" id="IPR024633">
    <property type="entry name" value="DnaA_N_dom"/>
</dbReference>
<dbReference type="InterPro" id="IPR038454">
    <property type="entry name" value="DnaA_N_sf"/>
</dbReference>
<dbReference type="InterPro" id="IPR055199">
    <property type="entry name" value="Hda_lid"/>
</dbReference>
<dbReference type="InterPro" id="IPR027417">
    <property type="entry name" value="P-loop_NTPase"/>
</dbReference>
<dbReference type="InterPro" id="IPR010921">
    <property type="entry name" value="Trp_repressor/repl_initiator"/>
</dbReference>
<dbReference type="NCBIfam" id="TIGR00362">
    <property type="entry name" value="DnaA"/>
    <property type="match status" value="1"/>
</dbReference>
<dbReference type="PANTHER" id="PTHR30050">
    <property type="entry name" value="CHROMOSOMAL REPLICATION INITIATOR PROTEIN DNAA"/>
    <property type="match status" value="1"/>
</dbReference>
<dbReference type="PANTHER" id="PTHR30050:SF2">
    <property type="entry name" value="CHROMOSOMAL REPLICATION INITIATOR PROTEIN DNAA"/>
    <property type="match status" value="1"/>
</dbReference>
<dbReference type="Pfam" id="PF00308">
    <property type="entry name" value="Bac_DnaA"/>
    <property type="match status" value="1"/>
</dbReference>
<dbReference type="Pfam" id="PF08299">
    <property type="entry name" value="Bac_DnaA_C"/>
    <property type="match status" value="1"/>
</dbReference>
<dbReference type="Pfam" id="PF11638">
    <property type="entry name" value="DnaA_N"/>
    <property type="match status" value="1"/>
</dbReference>
<dbReference type="Pfam" id="PF22688">
    <property type="entry name" value="Hda_lid"/>
    <property type="match status" value="1"/>
</dbReference>
<dbReference type="PRINTS" id="PR00051">
    <property type="entry name" value="DNAA"/>
</dbReference>
<dbReference type="SMART" id="SM00382">
    <property type="entry name" value="AAA"/>
    <property type="match status" value="1"/>
</dbReference>
<dbReference type="SMART" id="SM00760">
    <property type="entry name" value="Bac_DnaA_C"/>
    <property type="match status" value="1"/>
</dbReference>
<dbReference type="SUPFAM" id="SSF52540">
    <property type="entry name" value="P-loop containing nucleoside triphosphate hydrolases"/>
    <property type="match status" value="1"/>
</dbReference>
<dbReference type="SUPFAM" id="SSF48295">
    <property type="entry name" value="TrpR-like"/>
    <property type="match status" value="1"/>
</dbReference>
<dbReference type="PROSITE" id="PS01008">
    <property type="entry name" value="DNAA"/>
    <property type="match status" value="1"/>
</dbReference>